<feature type="chain" id="PRO_1000186530" description="Chorismate pyruvate-lyase">
    <location>
        <begin position="1"/>
        <end position="169"/>
    </location>
</feature>
<feature type="binding site" evidence="1">
    <location>
        <position position="37"/>
    </location>
    <ligand>
        <name>substrate</name>
    </ligand>
</feature>
<feature type="binding site" evidence="1">
    <location>
        <position position="79"/>
    </location>
    <ligand>
        <name>substrate</name>
    </ligand>
</feature>
<feature type="binding site" evidence="1">
    <location>
        <position position="117"/>
    </location>
    <ligand>
        <name>substrate</name>
    </ligand>
</feature>
<feature type="binding site" evidence="1">
    <location>
        <position position="158"/>
    </location>
    <ligand>
        <name>substrate</name>
    </ligand>
</feature>
<accession>B4EYR7</accession>
<sequence length="169" mass="20042">MFKKSIITHAPIHWLSDEEREEVAENTLSWLLELGSMTRRFEQHCHQVTVMPYQEGFIEYIEPADEQKCLPYSRRYWLREIVLCGDNVPWLLGRTLVPEETLTGEDRQLVNLRTVPLGRYLFQETTLSRDFIHIGQQNGHWLRRSRFQLSDKPLLLTEVFLPASPVYKQ</sequence>
<comment type="function">
    <text evidence="1">Removes the pyruvyl group from chorismate, with concomitant aromatization of the ring, to provide 4-hydroxybenzoate (4HB) for the ubiquinone pathway.</text>
</comment>
<comment type="catalytic activity">
    <reaction evidence="1">
        <text>chorismate = 4-hydroxybenzoate + pyruvate</text>
        <dbReference type="Rhea" id="RHEA:16505"/>
        <dbReference type="ChEBI" id="CHEBI:15361"/>
        <dbReference type="ChEBI" id="CHEBI:17879"/>
        <dbReference type="ChEBI" id="CHEBI:29748"/>
        <dbReference type="EC" id="4.1.3.40"/>
    </reaction>
</comment>
<comment type="pathway">
    <text evidence="1">Cofactor biosynthesis; ubiquinone biosynthesis.</text>
</comment>
<comment type="subunit">
    <text evidence="1">Monomer.</text>
</comment>
<comment type="subcellular location">
    <subcellularLocation>
        <location evidence="1">Cytoplasm</location>
    </subcellularLocation>
</comment>
<comment type="similarity">
    <text evidence="1">Belongs to the UbiC family.</text>
</comment>
<name>UBIC_PROMH</name>
<organism>
    <name type="scientific">Proteus mirabilis (strain HI4320)</name>
    <dbReference type="NCBI Taxonomy" id="529507"/>
    <lineage>
        <taxon>Bacteria</taxon>
        <taxon>Pseudomonadati</taxon>
        <taxon>Pseudomonadota</taxon>
        <taxon>Gammaproteobacteria</taxon>
        <taxon>Enterobacterales</taxon>
        <taxon>Morganellaceae</taxon>
        <taxon>Proteus</taxon>
    </lineage>
</organism>
<evidence type="ECO:0000255" key="1">
    <source>
        <dbReference type="HAMAP-Rule" id="MF_01632"/>
    </source>
</evidence>
<gene>
    <name evidence="1" type="primary">ubiC</name>
    <name type="ordered locus">PMI2753</name>
</gene>
<keyword id="KW-0963">Cytoplasm</keyword>
<keyword id="KW-0456">Lyase</keyword>
<keyword id="KW-0670">Pyruvate</keyword>
<keyword id="KW-1185">Reference proteome</keyword>
<keyword id="KW-0831">Ubiquinone biosynthesis</keyword>
<proteinExistence type="inferred from homology"/>
<reference key="1">
    <citation type="journal article" date="2008" name="J. Bacteriol.">
        <title>Complete genome sequence of uropathogenic Proteus mirabilis, a master of both adherence and motility.</title>
        <authorList>
            <person name="Pearson M.M."/>
            <person name="Sebaihia M."/>
            <person name="Churcher C."/>
            <person name="Quail M.A."/>
            <person name="Seshasayee A.S."/>
            <person name="Luscombe N.M."/>
            <person name="Abdellah Z."/>
            <person name="Arrosmith C."/>
            <person name="Atkin B."/>
            <person name="Chillingworth T."/>
            <person name="Hauser H."/>
            <person name="Jagels K."/>
            <person name="Moule S."/>
            <person name="Mungall K."/>
            <person name="Norbertczak H."/>
            <person name="Rabbinowitsch E."/>
            <person name="Walker D."/>
            <person name="Whithead S."/>
            <person name="Thomson N.R."/>
            <person name="Rather P.N."/>
            <person name="Parkhill J."/>
            <person name="Mobley H.L.T."/>
        </authorList>
    </citation>
    <scope>NUCLEOTIDE SEQUENCE [LARGE SCALE GENOMIC DNA]</scope>
    <source>
        <strain>HI4320</strain>
    </source>
</reference>
<protein>
    <recommendedName>
        <fullName evidence="1">Chorismate pyruvate-lyase</fullName>
        <shortName evidence="1">CL</shortName>
        <shortName evidence="1">CPL</shortName>
        <ecNumber evidence="1">4.1.3.40</ecNumber>
    </recommendedName>
</protein>
<dbReference type="EC" id="4.1.3.40" evidence="1"/>
<dbReference type="EMBL" id="AM942759">
    <property type="protein sequence ID" value="CAR45428.1"/>
    <property type="molecule type" value="Genomic_DNA"/>
</dbReference>
<dbReference type="RefSeq" id="WP_004245914.1">
    <property type="nucleotide sequence ID" value="NC_010554.1"/>
</dbReference>
<dbReference type="SMR" id="B4EYR7"/>
<dbReference type="EnsemblBacteria" id="CAR45428">
    <property type="protein sequence ID" value="CAR45428"/>
    <property type="gene ID" value="PMI2753"/>
</dbReference>
<dbReference type="GeneID" id="6802902"/>
<dbReference type="KEGG" id="pmr:PMI2753"/>
<dbReference type="eggNOG" id="COG3161">
    <property type="taxonomic scope" value="Bacteria"/>
</dbReference>
<dbReference type="HOGENOM" id="CLU_096824_1_0_6"/>
<dbReference type="UniPathway" id="UPA00232"/>
<dbReference type="Proteomes" id="UP000008319">
    <property type="component" value="Chromosome"/>
</dbReference>
<dbReference type="GO" id="GO:0005829">
    <property type="term" value="C:cytosol"/>
    <property type="evidence" value="ECO:0007669"/>
    <property type="project" value="TreeGrafter"/>
</dbReference>
<dbReference type="GO" id="GO:0008813">
    <property type="term" value="F:chorismate lyase activity"/>
    <property type="evidence" value="ECO:0007669"/>
    <property type="project" value="UniProtKB-UniRule"/>
</dbReference>
<dbReference type="GO" id="GO:0042866">
    <property type="term" value="P:pyruvate biosynthetic process"/>
    <property type="evidence" value="ECO:0007669"/>
    <property type="project" value="UniProtKB-UniRule"/>
</dbReference>
<dbReference type="GO" id="GO:0006744">
    <property type="term" value="P:ubiquinone biosynthetic process"/>
    <property type="evidence" value="ECO:0007669"/>
    <property type="project" value="UniProtKB-UniRule"/>
</dbReference>
<dbReference type="Gene3D" id="3.40.1410.10">
    <property type="entry name" value="Chorismate lyase-like"/>
    <property type="match status" value="1"/>
</dbReference>
<dbReference type="HAMAP" id="MF_01632">
    <property type="entry name" value="UbiC"/>
    <property type="match status" value="1"/>
</dbReference>
<dbReference type="InterPro" id="IPR007440">
    <property type="entry name" value="Chorismate--pyruvate_lyase"/>
</dbReference>
<dbReference type="InterPro" id="IPR028978">
    <property type="entry name" value="Chorismate_lyase_/UTRA_dom_sf"/>
</dbReference>
<dbReference type="NCBIfam" id="NF008656">
    <property type="entry name" value="PRK11655.1"/>
    <property type="match status" value="1"/>
</dbReference>
<dbReference type="PANTHER" id="PTHR38683">
    <property type="entry name" value="CHORISMATE PYRUVATE-LYASE"/>
    <property type="match status" value="1"/>
</dbReference>
<dbReference type="PANTHER" id="PTHR38683:SF1">
    <property type="entry name" value="CHORISMATE PYRUVATE-LYASE"/>
    <property type="match status" value="1"/>
</dbReference>
<dbReference type="Pfam" id="PF04345">
    <property type="entry name" value="Chor_lyase"/>
    <property type="match status" value="1"/>
</dbReference>
<dbReference type="SUPFAM" id="SSF64288">
    <property type="entry name" value="Chorismate lyase-like"/>
    <property type="match status" value="1"/>
</dbReference>